<reference key="1">
    <citation type="journal article" date="2000" name="Nature">
        <title>Sequence and analysis of chromosome 1 of the plant Arabidopsis thaliana.</title>
        <authorList>
            <person name="Theologis A."/>
            <person name="Ecker J.R."/>
            <person name="Palm C.J."/>
            <person name="Federspiel N.A."/>
            <person name="Kaul S."/>
            <person name="White O."/>
            <person name="Alonso J."/>
            <person name="Altafi H."/>
            <person name="Araujo R."/>
            <person name="Bowman C.L."/>
            <person name="Brooks S.Y."/>
            <person name="Buehler E."/>
            <person name="Chan A."/>
            <person name="Chao Q."/>
            <person name="Chen H."/>
            <person name="Cheuk R.F."/>
            <person name="Chin C.W."/>
            <person name="Chung M.K."/>
            <person name="Conn L."/>
            <person name="Conway A.B."/>
            <person name="Conway A.R."/>
            <person name="Creasy T.H."/>
            <person name="Dewar K."/>
            <person name="Dunn P."/>
            <person name="Etgu P."/>
            <person name="Feldblyum T.V."/>
            <person name="Feng J.-D."/>
            <person name="Fong B."/>
            <person name="Fujii C.Y."/>
            <person name="Gill J.E."/>
            <person name="Goldsmith A.D."/>
            <person name="Haas B."/>
            <person name="Hansen N.F."/>
            <person name="Hughes B."/>
            <person name="Huizar L."/>
            <person name="Hunter J.L."/>
            <person name="Jenkins J."/>
            <person name="Johnson-Hopson C."/>
            <person name="Khan S."/>
            <person name="Khaykin E."/>
            <person name="Kim C.J."/>
            <person name="Koo H.L."/>
            <person name="Kremenetskaia I."/>
            <person name="Kurtz D.B."/>
            <person name="Kwan A."/>
            <person name="Lam B."/>
            <person name="Langin-Hooper S."/>
            <person name="Lee A."/>
            <person name="Lee J.M."/>
            <person name="Lenz C.A."/>
            <person name="Li J.H."/>
            <person name="Li Y.-P."/>
            <person name="Lin X."/>
            <person name="Liu S.X."/>
            <person name="Liu Z.A."/>
            <person name="Luros J.S."/>
            <person name="Maiti R."/>
            <person name="Marziali A."/>
            <person name="Militscher J."/>
            <person name="Miranda M."/>
            <person name="Nguyen M."/>
            <person name="Nierman W.C."/>
            <person name="Osborne B.I."/>
            <person name="Pai G."/>
            <person name="Peterson J."/>
            <person name="Pham P.K."/>
            <person name="Rizzo M."/>
            <person name="Rooney T."/>
            <person name="Rowley D."/>
            <person name="Sakano H."/>
            <person name="Salzberg S.L."/>
            <person name="Schwartz J.R."/>
            <person name="Shinn P."/>
            <person name="Southwick A.M."/>
            <person name="Sun H."/>
            <person name="Tallon L.J."/>
            <person name="Tambunga G."/>
            <person name="Toriumi M.J."/>
            <person name="Town C.D."/>
            <person name="Utterback T."/>
            <person name="Van Aken S."/>
            <person name="Vaysberg M."/>
            <person name="Vysotskaia V.S."/>
            <person name="Walker M."/>
            <person name="Wu D."/>
            <person name="Yu G."/>
            <person name="Fraser C.M."/>
            <person name="Venter J.C."/>
            <person name="Davis R.W."/>
        </authorList>
    </citation>
    <scope>NUCLEOTIDE SEQUENCE [LARGE SCALE GENOMIC DNA]</scope>
    <source>
        <strain>cv. Columbia</strain>
    </source>
</reference>
<reference key="2">
    <citation type="journal article" date="2017" name="Plant J.">
        <title>Araport11: a complete reannotation of the Arabidopsis thaliana reference genome.</title>
        <authorList>
            <person name="Cheng C.Y."/>
            <person name="Krishnakumar V."/>
            <person name="Chan A.P."/>
            <person name="Thibaud-Nissen F."/>
            <person name="Schobel S."/>
            <person name="Town C.D."/>
        </authorList>
    </citation>
    <scope>GENOME REANNOTATION</scope>
    <source>
        <strain>cv. Columbia</strain>
    </source>
</reference>
<reference key="3">
    <citation type="journal article" date="2003" name="Science">
        <title>Empirical analysis of transcriptional activity in the Arabidopsis genome.</title>
        <authorList>
            <person name="Yamada K."/>
            <person name="Lim J."/>
            <person name="Dale J.M."/>
            <person name="Chen H."/>
            <person name="Shinn P."/>
            <person name="Palm C.J."/>
            <person name="Southwick A.M."/>
            <person name="Wu H.C."/>
            <person name="Kim C.J."/>
            <person name="Nguyen M."/>
            <person name="Pham P.K."/>
            <person name="Cheuk R.F."/>
            <person name="Karlin-Newmann G."/>
            <person name="Liu S.X."/>
            <person name="Lam B."/>
            <person name="Sakano H."/>
            <person name="Wu T."/>
            <person name="Yu G."/>
            <person name="Miranda M."/>
            <person name="Quach H.L."/>
            <person name="Tripp M."/>
            <person name="Chang C.H."/>
            <person name="Lee J.M."/>
            <person name="Toriumi M.J."/>
            <person name="Chan M.M."/>
            <person name="Tang C.C."/>
            <person name="Onodera C.S."/>
            <person name="Deng J.M."/>
            <person name="Akiyama K."/>
            <person name="Ansari Y."/>
            <person name="Arakawa T."/>
            <person name="Banh J."/>
            <person name="Banno F."/>
            <person name="Bowser L."/>
            <person name="Brooks S.Y."/>
            <person name="Carninci P."/>
            <person name="Chao Q."/>
            <person name="Choy N."/>
            <person name="Enju A."/>
            <person name="Goldsmith A.D."/>
            <person name="Gurjal M."/>
            <person name="Hansen N.F."/>
            <person name="Hayashizaki Y."/>
            <person name="Johnson-Hopson C."/>
            <person name="Hsuan V.W."/>
            <person name="Iida K."/>
            <person name="Karnes M."/>
            <person name="Khan S."/>
            <person name="Koesema E."/>
            <person name="Ishida J."/>
            <person name="Jiang P.X."/>
            <person name="Jones T."/>
            <person name="Kawai J."/>
            <person name="Kamiya A."/>
            <person name="Meyers C."/>
            <person name="Nakajima M."/>
            <person name="Narusaka M."/>
            <person name="Seki M."/>
            <person name="Sakurai T."/>
            <person name="Satou M."/>
            <person name="Tamse R."/>
            <person name="Vaysberg M."/>
            <person name="Wallender E.K."/>
            <person name="Wong C."/>
            <person name="Yamamura Y."/>
            <person name="Yuan S."/>
            <person name="Shinozaki K."/>
            <person name="Davis R.W."/>
            <person name="Theologis A."/>
            <person name="Ecker J.R."/>
        </authorList>
    </citation>
    <scope>NUCLEOTIDE SEQUENCE [LARGE SCALE MRNA]</scope>
    <source>
        <strain>cv. Columbia</strain>
    </source>
</reference>
<reference key="4">
    <citation type="submission" date="2006-07" db="EMBL/GenBank/DDBJ databases">
        <title>Large-scale analysis of RIKEN Arabidopsis full-length (RAFL) cDNAs.</title>
        <authorList>
            <person name="Totoki Y."/>
            <person name="Seki M."/>
            <person name="Ishida J."/>
            <person name="Nakajima M."/>
            <person name="Enju A."/>
            <person name="Kamiya A."/>
            <person name="Narusaka M."/>
            <person name="Shin-i T."/>
            <person name="Nakagawa M."/>
            <person name="Sakamoto N."/>
            <person name="Oishi K."/>
            <person name="Kohara Y."/>
            <person name="Kobayashi M."/>
            <person name="Toyoda A."/>
            <person name="Sakaki Y."/>
            <person name="Sakurai T."/>
            <person name="Iida K."/>
            <person name="Akiyama K."/>
            <person name="Satou M."/>
            <person name="Toyoda T."/>
            <person name="Konagaya A."/>
            <person name="Carninci P."/>
            <person name="Kawai J."/>
            <person name="Hayashizaki Y."/>
            <person name="Shinozaki K."/>
        </authorList>
    </citation>
    <scope>NUCLEOTIDE SEQUENCE [LARGE SCALE MRNA] OF 601-1178</scope>
    <source>
        <strain>cv. Columbia</strain>
    </source>
</reference>
<reference key="5">
    <citation type="journal article" date="2008" name="Genetics">
        <title>Sex-biased lethality or transmission of defective transcription machinery in Arabidopsis.</title>
        <authorList>
            <person name="Onodera Y."/>
            <person name="Nakagawa K."/>
            <person name="Haag J.R."/>
            <person name="Pikaard D."/>
            <person name="Mikami T."/>
            <person name="Ream T."/>
            <person name="Ito Y."/>
            <person name="Pikaard C.S."/>
        </authorList>
    </citation>
    <scope>FUNCTION</scope>
    <scope>DISRUPTION PHENOTYPE</scope>
</reference>
<keyword id="KW-0240">DNA-directed RNA polymerase</keyword>
<keyword id="KW-0479">Metal-binding</keyword>
<keyword id="KW-0548">Nucleotidyltransferase</keyword>
<keyword id="KW-0539">Nucleus</keyword>
<keyword id="KW-1185">Reference proteome</keyword>
<keyword id="KW-0690">Ribosome biogenesis</keyword>
<keyword id="KW-0804">Transcription</keyword>
<keyword id="KW-0808">Transferase</keyword>
<keyword id="KW-0862">Zinc</keyword>
<keyword id="KW-0863">Zinc-finger</keyword>
<gene>
    <name evidence="7" type="primary">NRPA2</name>
    <name evidence="3" type="synonym">RPA2</name>
    <name evidence="4" type="ordered locus">At1g29940</name>
    <name evidence="5" type="ORF">F1N18.2</name>
    <name evidence="6" type="ORF">T1P2.15</name>
</gene>
<dbReference type="EC" id="2.7.7.6" evidence="3"/>
<dbReference type="EMBL" id="AC008030">
    <property type="protein sequence ID" value="AAG10602.1"/>
    <property type="status" value="ALT_SEQ"/>
    <property type="molecule type" value="Genomic_DNA"/>
</dbReference>
<dbReference type="EMBL" id="AC022455">
    <property type="protein sequence ID" value="AAG52049.1"/>
    <property type="status" value="ALT_SEQ"/>
    <property type="molecule type" value="Genomic_DNA"/>
</dbReference>
<dbReference type="EMBL" id="CP002684">
    <property type="protein sequence ID" value="AEE31152.1"/>
    <property type="molecule type" value="Genomic_DNA"/>
</dbReference>
<dbReference type="EMBL" id="AY075644">
    <property type="status" value="NOT_ANNOTATED_CDS"/>
    <property type="molecule type" value="mRNA"/>
</dbReference>
<dbReference type="EMBL" id="AK230187">
    <property type="protein sequence ID" value="BAF01996.1"/>
    <property type="molecule type" value="mRNA"/>
</dbReference>
<dbReference type="PIR" id="B86423">
    <property type="entry name" value="B86423"/>
</dbReference>
<dbReference type="RefSeq" id="NP_564341.2">
    <property type="nucleotide sequence ID" value="NM_102734.5"/>
</dbReference>
<dbReference type="SMR" id="F4I366"/>
<dbReference type="FunCoup" id="F4I366">
    <property type="interactions" value="3913"/>
</dbReference>
<dbReference type="IntAct" id="F4I366">
    <property type="interactions" value="1"/>
</dbReference>
<dbReference type="STRING" id="3702.F4I366"/>
<dbReference type="iPTMnet" id="F4I366"/>
<dbReference type="PaxDb" id="3702-AT1G29940.1"/>
<dbReference type="ProteomicsDB" id="250601"/>
<dbReference type="EnsemblPlants" id="AT1G29940.1">
    <property type="protein sequence ID" value="AT1G29940.1"/>
    <property type="gene ID" value="AT1G29940"/>
</dbReference>
<dbReference type="GeneID" id="839872"/>
<dbReference type="Gramene" id="AT1G29940.1">
    <property type="protein sequence ID" value="AT1G29940.1"/>
    <property type="gene ID" value="AT1G29940"/>
</dbReference>
<dbReference type="KEGG" id="ath:AT1G29940"/>
<dbReference type="Araport" id="AT1G29940"/>
<dbReference type="TAIR" id="AT1G29940">
    <property type="gene designation" value="NRPA2"/>
</dbReference>
<dbReference type="eggNOG" id="KOG0216">
    <property type="taxonomic scope" value="Eukaryota"/>
</dbReference>
<dbReference type="HOGENOM" id="CLU_000524_5_1_1"/>
<dbReference type="InParanoid" id="F4I366"/>
<dbReference type="OMA" id="FFGVVHY"/>
<dbReference type="CD-CODE" id="4299E36E">
    <property type="entry name" value="Nucleolus"/>
</dbReference>
<dbReference type="PRO" id="PR:F4I366"/>
<dbReference type="Proteomes" id="UP000006548">
    <property type="component" value="Chromosome 1"/>
</dbReference>
<dbReference type="ExpressionAtlas" id="F4I366">
    <property type="expression patterns" value="baseline and differential"/>
</dbReference>
<dbReference type="GO" id="GO:0000428">
    <property type="term" value="C:DNA-directed RNA polymerase complex"/>
    <property type="evidence" value="ECO:0007669"/>
    <property type="project" value="UniProtKB-KW"/>
</dbReference>
<dbReference type="GO" id="GO:0005739">
    <property type="term" value="C:mitochondrion"/>
    <property type="evidence" value="ECO:0007669"/>
    <property type="project" value="GOC"/>
</dbReference>
<dbReference type="GO" id="GO:0005634">
    <property type="term" value="C:nucleus"/>
    <property type="evidence" value="ECO:0007669"/>
    <property type="project" value="UniProtKB-SubCell"/>
</dbReference>
<dbReference type="GO" id="GO:0009536">
    <property type="term" value="C:plastid"/>
    <property type="evidence" value="ECO:0007669"/>
    <property type="project" value="GOC"/>
</dbReference>
<dbReference type="GO" id="GO:0003677">
    <property type="term" value="F:DNA binding"/>
    <property type="evidence" value="ECO:0007669"/>
    <property type="project" value="InterPro"/>
</dbReference>
<dbReference type="GO" id="GO:0003899">
    <property type="term" value="F:DNA-directed RNA polymerase activity"/>
    <property type="evidence" value="ECO:0007669"/>
    <property type="project" value="UniProtKB-EC"/>
</dbReference>
<dbReference type="GO" id="GO:0032549">
    <property type="term" value="F:ribonucleoside binding"/>
    <property type="evidence" value="ECO:0007669"/>
    <property type="project" value="InterPro"/>
</dbReference>
<dbReference type="GO" id="GO:0008270">
    <property type="term" value="F:zinc ion binding"/>
    <property type="evidence" value="ECO:0007669"/>
    <property type="project" value="UniProtKB-KW"/>
</dbReference>
<dbReference type="GO" id="GO:0006351">
    <property type="term" value="P:DNA-templated transcription"/>
    <property type="evidence" value="ECO:0007669"/>
    <property type="project" value="InterPro"/>
</dbReference>
<dbReference type="GO" id="GO:0009561">
    <property type="term" value="P:megagametogenesis"/>
    <property type="evidence" value="ECO:0000315"/>
    <property type="project" value="UniProtKB"/>
</dbReference>
<dbReference type="GO" id="GO:0042254">
    <property type="term" value="P:ribosome biogenesis"/>
    <property type="evidence" value="ECO:0007669"/>
    <property type="project" value="UniProtKB-KW"/>
</dbReference>
<dbReference type="CDD" id="cd00653">
    <property type="entry name" value="RNA_pol_B_RPB2"/>
    <property type="match status" value="1"/>
</dbReference>
<dbReference type="FunFam" id="2.40.270.10:FF:000006">
    <property type="entry name" value="DNA-directed RNA polymerase subunit beta"/>
    <property type="match status" value="1"/>
</dbReference>
<dbReference type="FunFam" id="2.40.270.10:FF:000011">
    <property type="entry name" value="DNA-directed RNA polymerase subunit beta"/>
    <property type="match status" value="1"/>
</dbReference>
<dbReference type="FunFam" id="3.90.1100.10:FF:000008">
    <property type="entry name" value="DNA-directed RNA polymerase subunit beta"/>
    <property type="match status" value="1"/>
</dbReference>
<dbReference type="FunFam" id="3.90.1100.10:FF:000028">
    <property type="entry name" value="DNA-directed RNA polymerase subunit beta"/>
    <property type="match status" value="1"/>
</dbReference>
<dbReference type="FunFam" id="3.90.1110.10:FF:000007">
    <property type="entry name" value="DNA-directed RNA polymerase subunit beta"/>
    <property type="match status" value="1"/>
</dbReference>
<dbReference type="FunFam" id="3.90.1800.10:FF:000004">
    <property type="entry name" value="DNA-directed RNA polymerase subunit beta"/>
    <property type="match status" value="1"/>
</dbReference>
<dbReference type="Gene3D" id="2.40.50.150">
    <property type="match status" value="1"/>
</dbReference>
<dbReference type="Gene3D" id="3.90.1070.20">
    <property type="match status" value="1"/>
</dbReference>
<dbReference type="Gene3D" id="3.90.1100.10">
    <property type="match status" value="1"/>
</dbReference>
<dbReference type="Gene3D" id="2.40.270.10">
    <property type="entry name" value="DNA-directed RNA polymerase, subunit 2, domain 6"/>
    <property type="match status" value="1"/>
</dbReference>
<dbReference type="Gene3D" id="3.90.1800.10">
    <property type="entry name" value="RNA polymerase alpha subunit dimerisation domain"/>
    <property type="match status" value="1"/>
</dbReference>
<dbReference type="Gene3D" id="3.90.1110.10">
    <property type="entry name" value="RNA polymerase Rpb2, domain 2"/>
    <property type="match status" value="1"/>
</dbReference>
<dbReference type="InterPro" id="IPR015712">
    <property type="entry name" value="DNA-dir_RNA_pol_su2"/>
</dbReference>
<dbReference type="InterPro" id="IPR007120">
    <property type="entry name" value="DNA-dir_RNAP_su2_dom"/>
</dbReference>
<dbReference type="InterPro" id="IPR037033">
    <property type="entry name" value="DNA-dir_RNAP_su2_hyb_sf"/>
</dbReference>
<dbReference type="InterPro" id="IPR007121">
    <property type="entry name" value="RNA_pol_bsu_CS"/>
</dbReference>
<dbReference type="InterPro" id="IPR007644">
    <property type="entry name" value="RNA_pol_bsu_protrusion"/>
</dbReference>
<dbReference type="InterPro" id="IPR007642">
    <property type="entry name" value="RNA_pol_Rpb2_2"/>
</dbReference>
<dbReference type="InterPro" id="IPR037034">
    <property type="entry name" value="RNA_pol_Rpb2_2_sf"/>
</dbReference>
<dbReference type="InterPro" id="IPR007645">
    <property type="entry name" value="RNA_pol_Rpb2_3"/>
</dbReference>
<dbReference type="InterPro" id="IPR007641">
    <property type="entry name" value="RNA_pol_Rpb2_7"/>
</dbReference>
<dbReference type="InterPro" id="IPR014724">
    <property type="entry name" value="RNA_pol_RPB2_OB-fold"/>
</dbReference>
<dbReference type="InterPro" id="IPR009674">
    <property type="entry name" value="Rpa2_dom_4"/>
</dbReference>
<dbReference type="PANTHER" id="PTHR20856">
    <property type="entry name" value="DNA-DIRECTED RNA POLYMERASE I SUBUNIT 2"/>
    <property type="match status" value="1"/>
</dbReference>
<dbReference type="Pfam" id="PF06883">
    <property type="entry name" value="RNA_pol_Rpa2_4"/>
    <property type="match status" value="1"/>
</dbReference>
<dbReference type="Pfam" id="PF04563">
    <property type="entry name" value="RNA_pol_Rpb2_1"/>
    <property type="match status" value="1"/>
</dbReference>
<dbReference type="Pfam" id="PF04561">
    <property type="entry name" value="RNA_pol_Rpb2_2"/>
    <property type="match status" value="1"/>
</dbReference>
<dbReference type="Pfam" id="PF04565">
    <property type="entry name" value="RNA_pol_Rpb2_3"/>
    <property type="match status" value="1"/>
</dbReference>
<dbReference type="Pfam" id="PF00562">
    <property type="entry name" value="RNA_pol_Rpb2_6"/>
    <property type="match status" value="1"/>
</dbReference>
<dbReference type="Pfam" id="PF04560">
    <property type="entry name" value="RNA_pol_Rpb2_7"/>
    <property type="match status" value="1"/>
</dbReference>
<dbReference type="SUPFAM" id="SSF64484">
    <property type="entry name" value="beta and beta-prime subunits of DNA dependent RNA-polymerase"/>
    <property type="match status" value="1"/>
</dbReference>
<dbReference type="PROSITE" id="PS01166">
    <property type="entry name" value="RNA_POL_BETA"/>
    <property type="match status" value="1"/>
</dbReference>
<sequence>MVVNAKDSTVPTMEDFKELHNLVTHHIESFDYMTLKGLDVMFNRIKPVSVYDPNTENELSIWLENPLVFAPQKESFKSTSRKEPLLPFECRQAKISYTGTFMADVCFKYNDGVVVRDKFDFGQFPIMLMSKLCSLKGADCRKLLKCKESTSEMGGYFILNGIERVFRCVIAPKRNHPTSMIRNSFRDRKEGYSSKAVVTRCVRDDQSSVTVKLYYLRNGSARVGFWIVGREYLLPVGLVLKALTNSCDEEIYESLNCCYSEHYGRGDGAIGTQLVRERAKIILDEVRDLGLFTREQCRKHLGQHFQPVLDGVKKESLSIVAEAVLRDYLFVHLDNDHDKFNLLIFIIQKLYSLVDQTSLPDNPDSLQNQEILVPGHVITIYLKEKLEEWLRKCKSLLKDELDNTNSKFSFESLADVKKLINKNPPRSIGTSIETLLKTGALKTQSGLDLQQRAGYTVQAERLNFLRFLSFFRAVHRGASFAGLRTTTVRKLLPESWGFLCPVHTPDGTPCGLLNHMTRTSRITSQFDSKGNIRDFLKIRKSVVDVLTGAGMVPSLPKLVRAGPPKVIHVLLDGQVVGTLSSNLVTKVVSYIRRLKVEAPSVIPEDLEVGYVPTSMGGSYPGLYLASCPARFIRPVKNISIPSDNIELIGPFEQVFMEISCPDGGNGGRNNSSLATHEEIHPTGMISVVANLTPWSDHNQSPRNMYQCQMAKQTMAYSTQALQFRADQKIYHLQTPQSPVVRTKTYTTYSIDENPTGTNAIVAVLAHTGFDMEDAMILNKSSVERGMCHGQIYQTENIDLSDQNSRFDSGSKSFRRSTNKAEHFRIDADGLPSVGQKLYPDEPYCSIYDEVTNKTRHMKRKGTDPVIVDFVSVDMKSKKHPQRANIRFRHARNPIIGDKFSSRHGQKGVCSQLWPDIDMPFNGVTGMRPDLIINPHAFPSRMTIAMLLESIAAKGGSLHGKFVDATPFRDAVKKTNGEEESKSSLLVDDLGSMLKEKGFNHYGTETLYSGYLGVELKCEIFMGPVYYQRLRHMVSDKFQVRSTGQVDQLTHQPIKGRKRGGGIRFGEMERDSLLAHGASYLLHDRLHTSSDHHIADVCSLCGSLLTSSVVNVQQKKLIQEIGKLPPGRTPKKVTCYSCKTSKGMETVAMPYVFRYLAAELASMNIKMTLQLSDREGVTD</sequence>
<evidence type="ECO:0000250" key="1">
    <source>
        <dbReference type="UniProtKB" id="P22138"/>
    </source>
</evidence>
<evidence type="ECO:0000269" key="2">
    <source>
    </source>
</evidence>
<evidence type="ECO:0000305" key="3"/>
<evidence type="ECO:0000312" key="4">
    <source>
        <dbReference type="Araport" id="AT1G29940"/>
    </source>
</evidence>
<evidence type="ECO:0000312" key="5">
    <source>
        <dbReference type="EMBL" id="AAG10602.1"/>
    </source>
</evidence>
<evidence type="ECO:0000312" key="6">
    <source>
        <dbReference type="EMBL" id="AAG52049.1"/>
    </source>
</evidence>
<evidence type="ECO:0000312" key="7">
    <source>
        <dbReference type="EMBL" id="AEE31152.1"/>
    </source>
</evidence>
<accession>F4I366</accession>
<accession>Q0WLL1</accession>
<accession>Q9C8S4</accession>
<accession>Q9FXG4</accession>
<name>NRPA2_ARATH</name>
<feature type="chain" id="PRO_0000434009" description="DNA-directed RNA polymerase I subunit 2">
    <location>
        <begin position="1"/>
        <end position="1178"/>
    </location>
</feature>
<feature type="zinc finger region" description="C4-type" evidence="3">
    <location>
        <begin position="1097"/>
        <end position="1137"/>
    </location>
</feature>
<feature type="sequence conflict" description="In Ref. 4; BAF01996." evidence="3" ref="4">
    <original>G</original>
    <variation>D</variation>
    <location>
        <position position="1002"/>
    </location>
</feature>
<protein>
    <recommendedName>
        <fullName evidence="3">DNA-directed RNA polymerase I subunit 2</fullName>
    </recommendedName>
    <alternativeName>
        <fullName evidence="3">DNA-directed RNA polymerase I subunit RPA2</fullName>
        <shortName evidence="3">DNA polymerase I subunit A2</shortName>
        <ecNumber evidence="3">2.7.7.6</ecNumber>
    </alternativeName>
    <alternativeName>
        <fullName evidence="7">Nuclear RNA polymerase A2</fullName>
    </alternativeName>
</protein>
<comment type="function">
    <text evidence="1">DNA-dependent RNA polymerase catalyzes the transcription of DNA into RNA using the four ribonucleoside triphosphates as substrates. Second largest core component of RNA polymerase I which synthesizes ribosomal RNA precursors. Proposed to contribute to the polymerase catalytic activity and forms the polymerase active center together with the largest subunit. Pol I is composed of mobile elements and NRPA2 is part of the core element with the central large cleft and probably a clamp element that moves to open and close the cleft.</text>
</comment>
<comment type="function">
    <text evidence="2">Essential for the completion of the three rounds of mitosis in female megaspores required for the development of mature gametophytes.</text>
</comment>
<comment type="catalytic activity">
    <reaction evidence="3">
        <text>RNA(n) + a ribonucleoside 5'-triphosphate = RNA(n+1) + diphosphate</text>
        <dbReference type="Rhea" id="RHEA:21248"/>
        <dbReference type="Rhea" id="RHEA-COMP:14527"/>
        <dbReference type="Rhea" id="RHEA-COMP:17342"/>
        <dbReference type="ChEBI" id="CHEBI:33019"/>
        <dbReference type="ChEBI" id="CHEBI:61557"/>
        <dbReference type="ChEBI" id="CHEBI:140395"/>
        <dbReference type="EC" id="2.7.7.6"/>
    </reaction>
</comment>
<comment type="subunit">
    <text evidence="1">Component of the RNA polymerase I (Pol I) complex consisting of at least 13 subunits.</text>
</comment>
<comment type="subcellular location">
    <subcellularLocation>
        <location evidence="1">Nucleus</location>
    </subcellularLocation>
</comment>
<comment type="disruption phenotype">
    <text evidence="2">Defect in seed production due to female gametophyte developmental arrest.</text>
</comment>
<comment type="similarity">
    <text evidence="3">Belongs to the RNA polymerase beta chain family.</text>
</comment>
<comment type="sequence caution" evidence="3">
    <conflict type="erroneous gene model prediction">
        <sequence resource="EMBL-CDS" id="AAG10602"/>
    </conflict>
</comment>
<comment type="sequence caution" evidence="3">
    <conflict type="erroneous gene model prediction">
        <sequence resource="EMBL-CDS" id="AAG52049"/>
    </conflict>
</comment>
<comment type="sequence caution" evidence="3">
    <conflict type="frameshift">
        <sequence resource="EMBL" id="AY075644"/>
    </conflict>
</comment>
<proteinExistence type="evidence at transcript level"/>
<organism>
    <name type="scientific">Arabidopsis thaliana</name>
    <name type="common">Mouse-ear cress</name>
    <dbReference type="NCBI Taxonomy" id="3702"/>
    <lineage>
        <taxon>Eukaryota</taxon>
        <taxon>Viridiplantae</taxon>
        <taxon>Streptophyta</taxon>
        <taxon>Embryophyta</taxon>
        <taxon>Tracheophyta</taxon>
        <taxon>Spermatophyta</taxon>
        <taxon>Magnoliopsida</taxon>
        <taxon>eudicotyledons</taxon>
        <taxon>Gunneridae</taxon>
        <taxon>Pentapetalae</taxon>
        <taxon>rosids</taxon>
        <taxon>malvids</taxon>
        <taxon>Brassicales</taxon>
        <taxon>Brassicaceae</taxon>
        <taxon>Camelineae</taxon>
        <taxon>Arabidopsis</taxon>
    </lineage>
</organism>